<organism>
    <name type="scientific">Yersinia pseudotuberculosis serotype IB (strain PB1/+)</name>
    <dbReference type="NCBI Taxonomy" id="502801"/>
    <lineage>
        <taxon>Bacteria</taxon>
        <taxon>Pseudomonadati</taxon>
        <taxon>Pseudomonadota</taxon>
        <taxon>Gammaproteobacteria</taxon>
        <taxon>Enterobacterales</taxon>
        <taxon>Yersiniaceae</taxon>
        <taxon>Yersinia</taxon>
    </lineage>
</organism>
<proteinExistence type="inferred from homology"/>
<reference key="1">
    <citation type="submission" date="2008-04" db="EMBL/GenBank/DDBJ databases">
        <title>Complete sequence of Yersinia pseudotuberculosis PB1/+.</title>
        <authorList>
            <person name="Copeland A."/>
            <person name="Lucas S."/>
            <person name="Lapidus A."/>
            <person name="Glavina del Rio T."/>
            <person name="Dalin E."/>
            <person name="Tice H."/>
            <person name="Bruce D."/>
            <person name="Goodwin L."/>
            <person name="Pitluck S."/>
            <person name="Munk A.C."/>
            <person name="Brettin T."/>
            <person name="Detter J.C."/>
            <person name="Han C."/>
            <person name="Tapia R."/>
            <person name="Schmutz J."/>
            <person name="Larimer F."/>
            <person name="Land M."/>
            <person name="Hauser L."/>
            <person name="Challacombe J.F."/>
            <person name="Green L."/>
            <person name="Lindler L.E."/>
            <person name="Nikolich M.P."/>
            <person name="Richardson P."/>
        </authorList>
    </citation>
    <scope>NUCLEOTIDE SEQUENCE [LARGE SCALE GENOMIC DNA]</scope>
    <source>
        <strain>PB1/+</strain>
    </source>
</reference>
<comment type="similarity">
    <text evidence="1">Belongs to the DsrB family.</text>
</comment>
<feature type="chain" id="PRO_1000146861" description="Protein DsrB">
    <location>
        <begin position="1"/>
        <end position="63"/>
    </location>
</feature>
<dbReference type="EMBL" id="CP001048">
    <property type="protein sequence ID" value="ACC89453.1"/>
    <property type="molecule type" value="Genomic_DNA"/>
</dbReference>
<dbReference type="RefSeq" id="WP_002210892.1">
    <property type="nucleotide sequence ID" value="NZ_CP009780.1"/>
</dbReference>
<dbReference type="SMR" id="B2K6E4"/>
<dbReference type="GeneID" id="96666536"/>
<dbReference type="KEGG" id="ypb:YPTS_2492"/>
<dbReference type="PATRIC" id="fig|502801.10.peg.1904"/>
<dbReference type="HAMAP" id="MF_01549">
    <property type="entry name" value="DsrB"/>
    <property type="match status" value="1"/>
</dbReference>
<dbReference type="InterPro" id="IPR019717">
    <property type="entry name" value="Dextransucrase_DSRB"/>
</dbReference>
<dbReference type="NCBIfam" id="NF007981">
    <property type="entry name" value="PRK10708.1"/>
    <property type="match status" value="1"/>
</dbReference>
<dbReference type="Pfam" id="PF10781">
    <property type="entry name" value="DSRB"/>
    <property type="match status" value="1"/>
</dbReference>
<sequence>MKVNDRVTVKTDGGPRREGVVLEVEEFSEGVMYLVSLADYPAGVWFFNEVDSQDGTFVEPLSQ</sequence>
<accession>B2K6E4</accession>
<evidence type="ECO:0000255" key="1">
    <source>
        <dbReference type="HAMAP-Rule" id="MF_01549"/>
    </source>
</evidence>
<gene>
    <name evidence="1" type="primary">dsrB</name>
    <name type="ordered locus">YPTS_2492</name>
</gene>
<protein>
    <recommendedName>
        <fullName evidence="1">Protein DsrB</fullName>
    </recommendedName>
</protein>
<name>DSRB_YERPB</name>